<evidence type="ECO:0000255" key="1">
    <source>
        <dbReference type="HAMAP-Rule" id="MF_00051"/>
    </source>
</evidence>
<feature type="chain" id="PRO_0000113696" description="Serine hydroxymethyltransferase 1">
    <location>
        <begin position="1"/>
        <end position="416"/>
    </location>
</feature>
<feature type="binding site" evidence="1">
    <location>
        <position position="121"/>
    </location>
    <ligand>
        <name>(6S)-5,6,7,8-tetrahydrofolate</name>
        <dbReference type="ChEBI" id="CHEBI:57453"/>
    </ligand>
</feature>
<feature type="binding site" evidence="1">
    <location>
        <begin position="125"/>
        <end position="127"/>
    </location>
    <ligand>
        <name>(6S)-5,6,7,8-tetrahydrofolate</name>
        <dbReference type="ChEBI" id="CHEBI:57453"/>
    </ligand>
</feature>
<feature type="binding site" evidence="1">
    <location>
        <position position="245"/>
    </location>
    <ligand>
        <name>(6S)-5,6,7,8-tetrahydrofolate</name>
        <dbReference type="ChEBI" id="CHEBI:57453"/>
    </ligand>
</feature>
<feature type="binding site" evidence="1">
    <location>
        <begin position="354"/>
        <end position="356"/>
    </location>
    <ligand>
        <name>(6S)-5,6,7,8-tetrahydrofolate</name>
        <dbReference type="ChEBI" id="CHEBI:57453"/>
    </ligand>
</feature>
<feature type="site" description="Plays an important role in substrate specificity" evidence="1">
    <location>
        <position position="228"/>
    </location>
</feature>
<feature type="modified residue" description="N6-(pyridoxal phosphate)lysine" evidence="1">
    <location>
        <position position="229"/>
    </location>
</feature>
<protein>
    <recommendedName>
        <fullName evidence="1">Serine hydroxymethyltransferase 1</fullName>
        <shortName evidence="1">SHMT 1</shortName>
        <shortName evidence="1">Serine methylase 1</shortName>
        <ecNumber evidence="1">2.1.2.1</ecNumber>
    </recommendedName>
</protein>
<reference key="1">
    <citation type="journal article" date="2003" name="Genome Res.">
        <title>Comparative genome analysis of Vibrio vulnificus, a marine pathogen.</title>
        <authorList>
            <person name="Chen C.-Y."/>
            <person name="Wu K.-M."/>
            <person name="Chang Y.-C."/>
            <person name="Chang C.-H."/>
            <person name="Tsai H.-C."/>
            <person name="Liao T.-L."/>
            <person name="Liu Y.-M."/>
            <person name="Chen H.-J."/>
            <person name="Shen A.B.-T."/>
            <person name="Li J.-C."/>
            <person name="Su T.-L."/>
            <person name="Shao C.-P."/>
            <person name="Lee C.-T."/>
            <person name="Hor L.-I."/>
            <person name="Tsai S.-F."/>
        </authorList>
    </citation>
    <scope>NUCLEOTIDE SEQUENCE [LARGE SCALE GENOMIC DNA]</scope>
    <source>
        <strain>YJ016</strain>
    </source>
</reference>
<accession>Q7MN19</accession>
<sequence length="416" mass="45332">MLKRDMNIADYDAELFAAIQEETLRQEEHIELIASENYTSPRVMEAQGSQLTNKYAEGYPGKRYYGGCEYVDKAEALAIDRACQLFGCEYANVQPHSGSQANSAVYMALLNPGDTVLGMSLAHGGHLTHGSPVNFSGKHYNVIPYGIDEAGQINYDEMETLALEHKPKMIIGGFSAYSQIVDWKRMREIADKVDAYLFVDMAHVAGLIAAGEYPTPVPHAHVVTTTTHKTLAGPRGGLILSNAGEDMYKKLNSAVFPGGQGGPLMHVIAGKAVAFKEAMEPEFKAYQARVVKNAKAMVAQFQERGYKIVSNGTENHLFLVDLIDKDITGKDADAALGAANITVNKNSVPNDPRSPFVTSGIRVGTPAITRRGFTEADAKELANWMCDVLDNIGNEAVIEATKQKVLEICKRLPVYA</sequence>
<organism>
    <name type="scientific">Vibrio vulnificus (strain YJ016)</name>
    <dbReference type="NCBI Taxonomy" id="196600"/>
    <lineage>
        <taxon>Bacteria</taxon>
        <taxon>Pseudomonadati</taxon>
        <taxon>Pseudomonadota</taxon>
        <taxon>Gammaproteobacteria</taxon>
        <taxon>Vibrionales</taxon>
        <taxon>Vibrionaceae</taxon>
        <taxon>Vibrio</taxon>
    </lineage>
</organism>
<comment type="function">
    <text evidence="1">Catalyzes the reversible interconversion of serine and glycine with tetrahydrofolate (THF) serving as the one-carbon carrier. This reaction serves as the major source of one-carbon groups required for the biosynthesis of purines, thymidylate, methionine, and other important biomolecules. Also exhibits THF-independent aldolase activity toward beta-hydroxyamino acids, producing glycine and aldehydes, via a retro-aldol mechanism.</text>
</comment>
<comment type="catalytic activity">
    <reaction evidence="1">
        <text>(6R)-5,10-methylene-5,6,7,8-tetrahydrofolate + glycine + H2O = (6S)-5,6,7,8-tetrahydrofolate + L-serine</text>
        <dbReference type="Rhea" id="RHEA:15481"/>
        <dbReference type="ChEBI" id="CHEBI:15377"/>
        <dbReference type="ChEBI" id="CHEBI:15636"/>
        <dbReference type="ChEBI" id="CHEBI:33384"/>
        <dbReference type="ChEBI" id="CHEBI:57305"/>
        <dbReference type="ChEBI" id="CHEBI:57453"/>
        <dbReference type="EC" id="2.1.2.1"/>
    </reaction>
</comment>
<comment type="cofactor">
    <cofactor evidence="1">
        <name>pyridoxal 5'-phosphate</name>
        <dbReference type="ChEBI" id="CHEBI:597326"/>
    </cofactor>
</comment>
<comment type="pathway">
    <text evidence="1">One-carbon metabolism; tetrahydrofolate interconversion.</text>
</comment>
<comment type="pathway">
    <text evidence="1">Amino-acid biosynthesis; glycine biosynthesis; glycine from L-serine: step 1/1.</text>
</comment>
<comment type="subunit">
    <text evidence="1">Homodimer.</text>
</comment>
<comment type="subcellular location">
    <subcellularLocation>
        <location evidence="1">Cytoplasm</location>
    </subcellularLocation>
</comment>
<comment type="similarity">
    <text evidence="1">Belongs to the SHMT family.</text>
</comment>
<dbReference type="EC" id="2.1.2.1" evidence="1"/>
<dbReference type="EMBL" id="BA000037">
    <property type="protein sequence ID" value="BAC93662.1"/>
    <property type="molecule type" value="Genomic_DNA"/>
</dbReference>
<dbReference type="SMR" id="Q7MN19"/>
<dbReference type="STRING" id="672.VV93_v1c08350"/>
<dbReference type="KEGG" id="vvy:VV0898"/>
<dbReference type="PATRIC" id="fig|196600.6.peg.902"/>
<dbReference type="eggNOG" id="COG0112">
    <property type="taxonomic scope" value="Bacteria"/>
</dbReference>
<dbReference type="HOGENOM" id="CLU_022477_2_1_6"/>
<dbReference type="UniPathway" id="UPA00193"/>
<dbReference type="UniPathway" id="UPA00288">
    <property type="reaction ID" value="UER01023"/>
</dbReference>
<dbReference type="Proteomes" id="UP000002675">
    <property type="component" value="Chromosome I"/>
</dbReference>
<dbReference type="GO" id="GO:0005829">
    <property type="term" value="C:cytosol"/>
    <property type="evidence" value="ECO:0007669"/>
    <property type="project" value="TreeGrafter"/>
</dbReference>
<dbReference type="GO" id="GO:0004372">
    <property type="term" value="F:glycine hydroxymethyltransferase activity"/>
    <property type="evidence" value="ECO:0007669"/>
    <property type="project" value="UniProtKB-UniRule"/>
</dbReference>
<dbReference type="GO" id="GO:0030170">
    <property type="term" value="F:pyridoxal phosphate binding"/>
    <property type="evidence" value="ECO:0007669"/>
    <property type="project" value="UniProtKB-UniRule"/>
</dbReference>
<dbReference type="GO" id="GO:0019264">
    <property type="term" value="P:glycine biosynthetic process from serine"/>
    <property type="evidence" value="ECO:0007669"/>
    <property type="project" value="UniProtKB-UniRule"/>
</dbReference>
<dbReference type="GO" id="GO:0035999">
    <property type="term" value="P:tetrahydrofolate interconversion"/>
    <property type="evidence" value="ECO:0007669"/>
    <property type="project" value="UniProtKB-UniRule"/>
</dbReference>
<dbReference type="CDD" id="cd00378">
    <property type="entry name" value="SHMT"/>
    <property type="match status" value="1"/>
</dbReference>
<dbReference type="FunFam" id="3.40.640.10:FF:000001">
    <property type="entry name" value="Serine hydroxymethyltransferase"/>
    <property type="match status" value="1"/>
</dbReference>
<dbReference type="FunFam" id="3.90.1150.10:FF:000003">
    <property type="entry name" value="Serine hydroxymethyltransferase"/>
    <property type="match status" value="1"/>
</dbReference>
<dbReference type="Gene3D" id="3.90.1150.10">
    <property type="entry name" value="Aspartate Aminotransferase, domain 1"/>
    <property type="match status" value="1"/>
</dbReference>
<dbReference type="Gene3D" id="3.40.640.10">
    <property type="entry name" value="Type I PLP-dependent aspartate aminotransferase-like (Major domain)"/>
    <property type="match status" value="1"/>
</dbReference>
<dbReference type="HAMAP" id="MF_00051">
    <property type="entry name" value="SHMT"/>
    <property type="match status" value="1"/>
</dbReference>
<dbReference type="InterPro" id="IPR015424">
    <property type="entry name" value="PyrdxlP-dep_Trfase"/>
</dbReference>
<dbReference type="InterPro" id="IPR015421">
    <property type="entry name" value="PyrdxlP-dep_Trfase_major"/>
</dbReference>
<dbReference type="InterPro" id="IPR015422">
    <property type="entry name" value="PyrdxlP-dep_Trfase_small"/>
</dbReference>
<dbReference type="InterPro" id="IPR001085">
    <property type="entry name" value="Ser_HO-MeTrfase"/>
</dbReference>
<dbReference type="InterPro" id="IPR049943">
    <property type="entry name" value="Ser_HO-MeTrfase-like"/>
</dbReference>
<dbReference type="InterPro" id="IPR019798">
    <property type="entry name" value="Ser_HO-MeTrfase_PLP_BS"/>
</dbReference>
<dbReference type="InterPro" id="IPR039429">
    <property type="entry name" value="SHMT-like_dom"/>
</dbReference>
<dbReference type="NCBIfam" id="NF000586">
    <property type="entry name" value="PRK00011.1"/>
    <property type="match status" value="1"/>
</dbReference>
<dbReference type="PANTHER" id="PTHR11680">
    <property type="entry name" value="SERINE HYDROXYMETHYLTRANSFERASE"/>
    <property type="match status" value="1"/>
</dbReference>
<dbReference type="PANTHER" id="PTHR11680:SF50">
    <property type="entry name" value="SERINE HYDROXYMETHYLTRANSFERASE"/>
    <property type="match status" value="1"/>
</dbReference>
<dbReference type="Pfam" id="PF00464">
    <property type="entry name" value="SHMT"/>
    <property type="match status" value="1"/>
</dbReference>
<dbReference type="PIRSF" id="PIRSF000412">
    <property type="entry name" value="SHMT"/>
    <property type="match status" value="1"/>
</dbReference>
<dbReference type="SUPFAM" id="SSF53383">
    <property type="entry name" value="PLP-dependent transferases"/>
    <property type="match status" value="1"/>
</dbReference>
<dbReference type="PROSITE" id="PS00096">
    <property type="entry name" value="SHMT"/>
    <property type="match status" value="1"/>
</dbReference>
<gene>
    <name evidence="1" type="primary">glyA1</name>
    <name type="ordered locus">VV0898</name>
</gene>
<keyword id="KW-0028">Amino-acid biosynthesis</keyword>
<keyword id="KW-0963">Cytoplasm</keyword>
<keyword id="KW-0554">One-carbon metabolism</keyword>
<keyword id="KW-0663">Pyridoxal phosphate</keyword>
<keyword id="KW-0808">Transferase</keyword>
<name>GLYA1_VIBVY</name>
<proteinExistence type="inferred from homology"/>